<proteinExistence type="inferred from homology"/>
<keyword id="KW-0445">Lipid transport</keyword>
<keyword id="KW-1185">Reference proteome</keyword>
<keyword id="KW-0964">Secreted</keyword>
<keyword id="KW-0732">Signal</keyword>
<keyword id="KW-0813">Transport</keyword>
<organism>
    <name type="scientific">Theropithecus gelada</name>
    <name type="common">Gelada baboon</name>
    <dbReference type="NCBI Taxonomy" id="9565"/>
    <lineage>
        <taxon>Eukaryota</taxon>
        <taxon>Metazoa</taxon>
        <taxon>Chordata</taxon>
        <taxon>Craniata</taxon>
        <taxon>Vertebrata</taxon>
        <taxon>Euteleostomi</taxon>
        <taxon>Mammalia</taxon>
        <taxon>Eutheria</taxon>
        <taxon>Euarchontoglires</taxon>
        <taxon>Primates</taxon>
        <taxon>Haplorrhini</taxon>
        <taxon>Catarrhini</taxon>
        <taxon>Cercopithecidae</taxon>
        <taxon>Cercopithecinae</taxon>
        <taxon>Theropithecus</taxon>
    </lineage>
</organism>
<reference key="1">
    <citation type="submission" date="2015-03" db="EMBL/GenBank/DDBJ databases">
        <title>Whole genome of Theropithecus gelada.</title>
        <authorList>
            <person name="Chiou K.L."/>
            <person name="Snyder-Mackler N."/>
        </authorList>
    </citation>
    <scope>NUCLEOTIDE SEQUENCE [LARGE SCALE GENOMIC DNA]</scope>
    <source>
        <tissue>Blood</tissue>
    </source>
</reference>
<reference key="2">
    <citation type="journal article" date="2013" name="Front. Biol.">
        <title>Proteogenomic Review of the Changes in Primate apoC-I during Evolution.</title>
        <authorList>
            <person name="Puppione D."/>
            <person name="Whitelegge J.P."/>
        </authorList>
    </citation>
    <scope>REVIEW</scope>
</reference>
<reference key="3">
    <citation type="journal article" date="2014" name="Comp. Biochem. Physiol.">
        <title>Higher primates, but not New World monkeys, have a duplicate set of enhancers flanking their apoC-I genes.</title>
        <authorList>
            <person name="Puppione D.L."/>
        </authorList>
    </citation>
    <scope>GENE DUPLICATION</scope>
</reference>
<reference key="4">
    <citation type="unpublished observations" date="2019-10">
        <authorList>
            <person name="Puppione D.L."/>
        </authorList>
    </citation>
    <scope>IDENTIFICATION</scope>
</reference>
<evidence type="ECO:0000250" key="1">
    <source>
        <dbReference type="UniProtKB" id="P02654"/>
    </source>
</evidence>
<evidence type="ECO:0000255" key="2"/>
<evidence type="ECO:0000303" key="3">
    <source>
    </source>
</evidence>
<evidence type="ECO:0000305" key="4"/>
<protein>
    <recommendedName>
        <fullName>Apolipoprotein C-I, acidic form</fullName>
        <shortName>Apo-CIA</shortName>
        <shortName>ApoC-IA</shortName>
    </recommendedName>
    <alternativeName>
        <fullName>Apolipoprotein C1A</fullName>
    </alternativeName>
    <component>
        <recommendedName>
            <fullName>Truncated apolipoprotein C-I, acidic form</fullName>
            <shortName>Apo-CIA'</shortName>
            <shortName>ApoC-IA'</shortName>
        </recommendedName>
    </component>
</protein>
<name>APO1A_THEGE</name>
<feature type="signal peptide" evidence="2">
    <location>
        <begin position="1"/>
        <end position="24"/>
    </location>
</feature>
<feature type="chain" id="PRO_0000448759" description="Apolipoprotein C-I, acidic form">
    <location>
        <begin position="25"/>
        <end position="81"/>
    </location>
</feature>
<feature type="chain" id="PRO_0000448760" description="Truncated apolipoprotein C-I, acidic form">
    <location>
        <begin position="27"/>
        <end position="81"/>
    </location>
</feature>
<gene>
    <name type="primary">APOC1A</name>
</gene>
<dbReference type="EMBL" id="CM009950">
    <property type="status" value="NOT_ANNOTATED_CDS"/>
    <property type="molecule type" value="Genomic_DNA"/>
</dbReference>
<dbReference type="SMR" id="P0DTR6"/>
<dbReference type="Ensembl" id="ENSTGET00000028801.1">
    <property type="protein sequence ID" value="ENSTGEP00000024149.1"/>
    <property type="gene ID" value="ENSTGEG00000019543.1"/>
</dbReference>
<dbReference type="Proteomes" id="UP000694411">
    <property type="component" value="Chromosome 19"/>
</dbReference>
<dbReference type="GO" id="GO:0034364">
    <property type="term" value="C:high-density lipoprotein particle"/>
    <property type="evidence" value="ECO:0007669"/>
    <property type="project" value="TreeGrafter"/>
</dbReference>
<dbReference type="GO" id="GO:0034361">
    <property type="term" value="C:very-low-density lipoprotein particle"/>
    <property type="evidence" value="ECO:0007669"/>
    <property type="project" value="TreeGrafter"/>
</dbReference>
<dbReference type="GO" id="GO:0005504">
    <property type="term" value="F:fatty acid binding"/>
    <property type="evidence" value="ECO:0007669"/>
    <property type="project" value="TreeGrafter"/>
</dbReference>
<dbReference type="GO" id="GO:0004859">
    <property type="term" value="F:phospholipase inhibitor activity"/>
    <property type="evidence" value="ECO:0007669"/>
    <property type="project" value="TreeGrafter"/>
</dbReference>
<dbReference type="GO" id="GO:0006869">
    <property type="term" value="P:lipid transport"/>
    <property type="evidence" value="ECO:0007669"/>
    <property type="project" value="UniProtKB-KW"/>
</dbReference>
<dbReference type="GO" id="GO:0042157">
    <property type="term" value="P:lipoprotein metabolic process"/>
    <property type="evidence" value="ECO:0007669"/>
    <property type="project" value="InterPro"/>
</dbReference>
<dbReference type="GO" id="GO:0032375">
    <property type="term" value="P:negative regulation of cholesterol transport"/>
    <property type="evidence" value="ECO:0007669"/>
    <property type="project" value="TreeGrafter"/>
</dbReference>
<dbReference type="GO" id="GO:0050995">
    <property type="term" value="P:negative regulation of lipid catabolic process"/>
    <property type="evidence" value="ECO:0007669"/>
    <property type="project" value="TreeGrafter"/>
</dbReference>
<dbReference type="GO" id="GO:0010916">
    <property type="term" value="P:negative regulation of very-low-density lipoprotein particle clearance"/>
    <property type="evidence" value="ECO:0007669"/>
    <property type="project" value="TreeGrafter"/>
</dbReference>
<dbReference type="GO" id="GO:0006641">
    <property type="term" value="P:triglyceride metabolic process"/>
    <property type="evidence" value="ECO:0007669"/>
    <property type="project" value="TreeGrafter"/>
</dbReference>
<dbReference type="GO" id="GO:0034447">
    <property type="term" value="P:very-low-density lipoprotein particle clearance"/>
    <property type="evidence" value="ECO:0007669"/>
    <property type="project" value="TreeGrafter"/>
</dbReference>
<dbReference type="Gene3D" id="4.10.260.30">
    <property type="entry name" value="Apolipoprotein C-I"/>
    <property type="match status" value="1"/>
</dbReference>
<dbReference type="InterPro" id="IPR043081">
    <property type="entry name" value="ApoC-1_sf"/>
</dbReference>
<dbReference type="InterPro" id="IPR006781">
    <property type="entry name" value="ApoC-I"/>
</dbReference>
<dbReference type="PANTHER" id="PTHR16565">
    <property type="entry name" value="APOLIPOPROTEIN C-I"/>
    <property type="match status" value="1"/>
</dbReference>
<dbReference type="PANTHER" id="PTHR16565:SF3">
    <property type="entry name" value="APOLIPOPROTEIN C-I, ACIDIC FORM"/>
    <property type="match status" value="1"/>
</dbReference>
<dbReference type="Pfam" id="PF04691">
    <property type="entry name" value="ApoC-I"/>
    <property type="match status" value="1"/>
</dbReference>
<sequence>MRLFLSLLVVVLSIVLEGPTPAQGVPDVSNSFDVLEGFGKTLEDNVREFINLITQSELPAKTRDWFSETFRKVKEKLKINS</sequence>
<comment type="subcellular location">
    <subcellularLocation>
        <location evidence="1">Secreted</location>
    </subcellularLocation>
</comment>
<comment type="miscellaneous">
    <text evidence="3">Apolipoprotein C-I is present in acidic (APOC1A) and basic (APOC1B) forms in P.paniscus, P.abelii and P.troglodytes and perhaps also in baboons and macaques. The two genes for ApoC-I arose through a duplication process that occurred after the divergence of New World monkeys from the human lineage. In human, the acidic form has become a pseudogene sometime between the divergence of bonobos and chimpanzees from the human lineage and the appearance of the Denisovans. Pseudogenization resulted when the codon for the penultimate amino acid in the signal sequence was changed to a stop codon.</text>
</comment>
<comment type="similarity">
    <text evidence="4">Belongs to the apolipoprotein C1 family.</text>
</comment>
<accession>P0DTR6</accession>